<feature type="chain" id="PRO_0000411566" description="Putative pre-16S rRNA nuclease">
    <location>
        <begin position="1"/>
        <end position="139"/>
    </location>
</feature>
<name>YQGF_STRPQ</name>
<gene>
    <name type="ordered locus">SPs1795</name>
</gene>
<accession>P0DF53</accession>
<accession>P67494</accession>
<accession>Q877W9</accession>
<accession>Q8K5K1</accession>
<accession>Q8NZ31</accession>
<evidence type="ECO:0000255" key="1">
    <source>
        <dbReference type="HAMAP-Rule" id="MF_00651"/>
    </source>
</evidence>
<protein>
    <recommendedName>
        <fullName evidence="1">Putative pre-16S rRNA nuclease</fullName>
        <ecNumber evidence="1">3.1.-.-</ecNumber>
    </recommendedName>
</protein>
<dbReference type="EC" id="3.1.-.-" evidence="1"/>
<dbReference type="EMBL" id="BA000034">
    <property type="protein sequence ID" value="BAC64890.1"/>
    <property type="molecule type" value="Genomic_DNA"/>
</dbReference>
<dbReference type="SMR" id="P0DF53"/>
<dbReference type="KEGG" id="sps:SPs1795"/>
<dbReference type="HOGENOM" id="CLU_098240_2_0_9"/>
<dbReference type="GO" id="GO:0005829">
    <property type="term" value="C:cytosol"/>
    <property type="evidence" value="ECO:0007669"/>
    <property type="project" value="TreeGrafter"/>
</dbReference>
<dbReference type="GO" id="GO:0004518">
    <property type="term" value="F:nuclease activity"/>
    <property type="evidence" value="ECO:0007669"/>
    <property type="project" value="UniProtKB-KW"/>
</dbReference>
<dbReference type="GO" id="GO:0000967">
    <property type="term" value="P:rRNA 5'-end processing"/>
    <property type="evidence" value="ECO:0007669"/>
    <property type="project" value="UniProtKB-UniRule"/>
</dbReference>
<dbReference type="CDD" id="cd16964">
    <property type="entry name" value="YqgF"/>
    <property type="match status" value="1"/>
</dbReference>
<dbReference type="FunFam" id="3.30.420.140:FF:000003">
    <property type="entry name" value="Putative pre-16S rRNA nuclease"/>
    <property type="match status" value="1"/>
</dbReference>
<dbReference type="Gene3D" id="3.30.420.140">
    <property type="entry name" value="YqgF/RNase H-like domain"/>
    <property type="match status" value="1"/>
</dbReference>
<dbReference type="HAMAP" id="MF_00651">
    <property type="entry name" value="Nuclease_YqgF"/>
    <property type="match status" value="1"/>
</dbReference>
<dbReference type="InterPro" id="IPR012337">
    <property type="entry name" value="RNaseH-like_sf"/>
</dbReference>
<dbReference type="InterPro" id="IPR005227">
    <property type="entry name" value="YqgF"/>
</dbReference>
<dbReference type="InterPro" id="IPR006641">
    <property type="entry name" value="YqgF/RNaseH-like_dom"/>
</dbReference>
<dbReference type="InterPro" id="IPR037027">
    <property type="entry name" value="YqgF/RNaseH-like_dom_sf"/>
</dbReference>
<dbReference type="NCBIfam" id="TIGR00250">
    <property type="entry name" value="RNAse_H_YqgF"/>
    <property type="match status" value="1"/>
</dbReference>
<dbReference type="PANTHER" id="PTHR33317">
    <property type="entry name" value="POLYNUCLEOTIDYL TRANSFERASE, RIBONUCLEASE H-LIKE SUPERFAMILY PROTEIN"/>
    <property type="match status" value="1"/>
</dbReference>
<dbReference type="PANTHER" id="PTHR33317:SF4">
    <property type="entry name" value="POLYNUCLEOTIDYL TRANSFERASE, RIBONUCLEASE H-LIKE SUPERFAMILY PROTEIN"/>
    <property type="match status" value="1"/>
</dbReference>
<dbReference type="Pfam" id="PF03652">
    <property type="entry name" value="RuvX"/>
    <property type="match status" value="1"/>
</dbReference>
<dbReference type="SMART" id="SM00732">
    <property type="entry name" value="YqgFc"/>
    <property type="match status" value="1"/>
</dbReference>
<dbReference type="SUPFAM" id="SSF53098">
    <property type="entry name" value="Ribonuclease H-like"/>
    <property type="match status" value="1"/>
</dbReference>
<comment type="function">
    <text evidence="1">Could be a nuclease involved in processing of the 5'-end of pre-16S rRNA.</text>
</comment>
<comment type="subcellular location">
    <subcellularLocation>
        <location evidence="1">Cytoplasm</location>
    </subcellularLocation>
</comment>
<comment type="similarity">
    <text evidence="1">Belongs to the YqgF nuclease family.</text>
</comment>
<keyword id="KW-0963">Cytoplasm</keyword>
<keyword id="KW-0378">Hydrolase</keyword>
<keyword id="KW-0540">Nuclease</keyword>
<keyword id="KW-0690">Ribosome biogenesis</keyword>
<reference key="1">
    <citation type="journal article" date="2003" name="Genome Res.">
        <title>Genome sequence of an M3 strain of Streptococcus pyogenes reveals a large-scale genomic rearrangement in invasive strains and new insights into phage evolution.</title>
        <authorList>
            <person name="Nakagawa I."/>
            <person name="Kurokawa K."/>
            <person name="Yamashita A."/>
            <person name="Nakata M."/>
            <person name="Tomiyasu Y."/>
            <person name="Okahashi N."/>
            <person name="Kawabata S."/>
            <person name="Yamazaki K."/>
            <person name="Shiba T."/>
            <person name="Yasunaga T."/>
            <person name="Hayashi H."/>
            <person name="Hattori M."/>
            <person name="Hamada S."/>
        </authorList>
    </citation>
    <scope>NUCLEOTIDE SEQUENCE [LARGE SCALE GENOMIC DNA]</scope>
    <source>
        <strain>SSI-1</strain>
    </source>
</reference>
<organism>
    <name type="scientific">Streptococcus pyogenes serotype M3 (strain SSI-1)</name>
    <dbReference type="NCBI Taxonomy" id="193567"/>
    <lineage>
        <taxon>Bacteria</taxon>
        <taxon>Bacillati</taxon>
        <taxon>Bacillota</taxon>
        <taxon>Bacilli</taxon>
        <taxon>Lactobacillales</taxon>
        <taxon>Streptococcaceae</taxon>
        <taxon>Streptococcus</taxon>
    </lineage>
</organism>
<sequence length="139" mass="15760">MRIMGLDVGSKTVGVAISDPLGFTAQGLEIIKIDEEKAEFGFTRLEELVKQYQVEQFVIGLPKNMNNTNGPRVDASITYGNHIEHLFGLPVHYQDERLTTVEAERMLIEQADISRGKRKKVIDKLAAQLILQNYLNRNF</sequence>
<proteinExistence type="inferred from homology"/>